<protein>
    <recommendedName>
        <fullName>UPF0111 protein MTH_1689</fullName>
    </recommendedName>
</protein>
<accession>O27724</accession>
<evidence type="ECO:0000305" key="1"/>
<sequence length="217" mass="25352">MKFFLKESKVEKHGRQHLEKVMECYLKFEELMEAFYRGDCRLVSELTKEIAIKEHEADEIRRKMELEFYEGAFLPFDREDRIMLVESIDKVADVIESAAFTVSLGKVAFPAEFRDDFRAMMKVTGKTIRALHECVESLETDLGEAMRKVHEIERFEDEADIIERKIITGLYSAYRQDRIGVVKFLDMKEITRKVANISDRAEDASDRALIIIAKRRG</sequence>
<dbReference type="EMBL" id="AE000666">
    <property type="protein sequence ID" value="AAB86161.1"/>
    <property type="molecule type" value="Genomic_DNA"/>
</dbReference>
<dbReference type="PIR" id="G69092">
    <property type="entry name" value="G69092"/>
</dbReference>
<dbReference type="RefSeq" id="WP_010877296.1">
    <property type="nucleotide sequence ID" value="NC_000916.1"/>
</dbReference>
<dbReference type="SMR" id="O27724"/>
<dbReference type="STRING" id="187420.MTH_1689"/>
<dbReference type="PaxDb" id="187420-MTH_1689"/>
<dbReference type="EnsemblBacteria" id="AAB86161">
    <property type="protein sequence ID" value="AAB86161"/>
    <property type="gene ID" value="MTH_1689"/>
</dbReference>
<dbReference type="KEGG" id="mth:MTH_1689"/>
<dbReference type="PATRIC" id="fig|187420.15.peg.1649"/>
<dbReference type="HOGENOM" id="CLU_104916_1_1_2"/>
<dbReference type="InParanoid" id="O27724"/>
<dbReference type="Proteomes" id="UP000005223">
    <property type="component" value="Chromosome"/>
</dbReference>
<dbReference type="Gene3D" id="1.20.58.220">
    <property type="entry name" value="Phosphate transport system protein phou homolog 2, domain 2"/>
    <property type="match status" value="1"/>
</dbReference>
<dbReference type="InterPro" id="IPR002727">
    <property type="entry name" value="DUF47"/>
</dbReference>
<dbReference type="InterPro" id="IPR038078">
    <property type="entry name" value="PhoU-like_sf"/>
</dbReference>
<dbReference type="InterPro" id="IPR018445">
    <property type="entry name" value="Put_Phosphate_transp_reg"/>
</dbReference>
<dbReference type="NCBIfam" id="TIGR00153">
    <property type="entry name" value="TIGR00153 family protein"/>
    <property type="match status" value="1"/>
</dbReference>
<dbReference type="PANTHER" id="PTHR36536">
    <property type="entry name" value="UPF0111 PROTEIN HI_1603"/>
    <property type="match status" value="1"/>
</dbReference>
<dbReference type="PANTHER" id="PTHR36536:SF3">
    <property type="entry name" value="UPF0111 PROTEIN HI_1603"/>
    <property type="match status" value="1"/>
</dbReference>
<dbReference type="Pfam" id="PF01865">
    <property type="entry name" value="PhoU_div"/>
    <property type="match status" value="1"/>
</dbReference>
<dbReference type="SUPFAM" id="SSF109755">
    <property type="entry name" value="PhoU-like"/>
    <property type="match status" value="1"/>
</dbReference>
<reference key="1">
    <citation type="journal article" date="1997" name="J. Bacteriol.">
        <title>Complete genome sequence of Methanobacterium thermoautotrophicum deltaH: functional analysis and comparative genomics.</title>
        <authorList>
            <person name="Smith D.R."/>
            <person name="Doucette-Stamm L.A."/>
            <person name="Deloughery C."/>
            <person name="Lee H.-M."/>
            <person name="Dubois J."/>
            <person name="Aldredge T."/>
            <person name="Bashirzadeh R."/>
            <person name="Blakely D."/>
            <person name="Cook R."/>
            <person name="Gilbert K."/>
            <person name="Harrison D."/>
            <person name="Hoang L."/>
            <person name="Keagle P."/>
            <person name="Lumm W."/>
            <person name="Pothier B."/>
            <person name="Qiu D."/>
            <person name="Spadafora R."/>
            <person name="Vicare R."/>
            <person name="Wang Y."/>
            <person name="Wierzbowski J."/>
            <person name="Gibson R."/>
            <person name="Jiwani N."/>
            <person name="Caruso A."/>
            <person name="Bush D."/>
            <person name="Safer H."/>
            <person name="Patwell D."/>
            <person name="Prabhakar S."/>
            <person name="McDougall S."/>
            <person name="Shimer G."/>
            <person name="Goyal A."/>
            <person name="Pietrovski S."/>
            <person name="Church G.M."/>
            <person name="Daniels C.J."/>
            <person name="Mao J.-I."/>
            <person name="Rice P."/>
            <person name="Noelling J."/>
            <person name="Reeve J.N."/>
        </authorList>
    </citation>
    <scope>NUCLEOTIDE SEQUENCE [LARGE SCALE GENOMIC DNA]</scope>
    <source>
        <strain>ATCC 29096 / DSM 1053 / JCM 10044 / NBRC 100330 / Delta H</strain>
    </source>
</reference>
<gene>
    <name type="ordered locus">MTH_1689</name>
</gene>
<name>Y1689_METTH</name>
<organism>
    <name type="scientific">Methanothermobacter thermautotrophicus (strain ATCC 29096 / DSM 1053 / JCM 10044 / NBRC 100330 / Delta H)</name>
    <name type="common">Methanobacterium thermoautotrophicum</name>
    <dbReference type="NCBI Taxonomy" id="187420"/>
    <lineage>
        <taxon>Archaea</taxon>
        <taxon>Methanobacteriati</taxon>
        <taxon>Methanobacteriota</taxon>
        <taxon>Methanomada group</taxon>
        <taxon>Methanobacteria</taxon>
        <taxon>Methanobacteriales</taxon>
        <taxon>Methanobacteriaceae</taxon>
        <taxon>Methanothermobacter</taxon>
    </lineage>
</organism>
<comment type="similarity">
    <text evidence="1">Belongs to the UPF0111 family.</text>
</comment>
<feature type="chain" id="PRO_0000154914" description="UPF0111 protein MTH_1689">
    <location>
        <begin position="1"/>
        <end position="217"/>
    </location>
</feature>
<proteinExistence type="inferred from homology"/>
<keyword id="KW-1185">Reference proteome</keyword>